<sequence>MHKRNGPQAPPGRGAVTARQLGLLVDFSPDGLMIPEDGINEEELEAEFLALVGGQPQALEKLKGQGPLPMEAIEKMARLCMRDLDEDEEGTDEDDVEADEDLLAELNEVLGEEQKAVEPLMPVAQPKPSGPNPGVEATLQERLTLYQSALESARQAGDSAKMRRYDRGLKTLENLLVSAKKGNIINEADIPPPVASGKGAAAGHSHTQATSQLASVSPPAPESSGTLEAPSTTTPTSAKPQLPPDPCSPLARLQSLQHEYKLAALRAKHQDDTATATRHLRIAKSFDPVLEALSRGELVDLSRLPPPPDQLSPEPPLPAAQPLTSASTLTRPEVPQPPRNLLEALEQRMERYHVAAAQAKAKGDQRKARMHERIVKQYQDAIRAHKAGRAVDVAELPVPPGFPPMQGLESAEPSQQSLVGVLETAMRLANHDEGSDDEEEETPKKQNTPAASTTQLKSSPSKAPPSGPAPAGKAAPKGTSNRAQQQLAFLEGRKKQLLQAALRAKQKNDVEGAKMHLRQAKGLEPMLEASRNGLPVDIAKVPPAPVNKDDFVLVQRPGPGLSQEAVRRYGELTKLLRQQHEMCLNHSTQFTHLGNIAETIKFEKLAEDCKRSMDTLKQAFARSLPTPAARFEQRTFSVIKVFPDLSNSDMLLFIVKGINLPTPTGLSPSDLDAFVRFDFPYPNVEEAQKDKTSVIKNTDSPEFKEQFKLCINRGHRGFRRAIQTKGIKFEVVHKGGLFKTDRVLGTAQLKLGTLETACEVHEILEVLDGRRPTGGRLEVMVRIREPLTAQQLETTTERWLVIDHIPAAMPTVTGPKAKAPLIPASSREAGNRSARPLHSLSVLAFDQERLERKILALRQARRPVPPEVAQQYQDVVQRSQWQRAQLEQGGAALRREYASHLERQLHFYTEAARRLGYDGSREAAKEALYRRNLVESELQRLRR</sequence>
<organism>
    <name type="scientific">Mus musculus</name>
    <name type="common">Mouse</name>
    <dbReference type="NCBI Taxonomy" id="10090"/>
    <lineage>
        <taxon>Eukaryota</taxon>
        <taxon>Metazoa</taxon>
        <taxon>Chordata</taxon>
        <taxon>Craniata</taxon>
        <taxon>Vertebrata</taxon>
        <taxon>Euteleostomi</taxon>
        <taxon>Mammalia</taxon>
        <taxon>Eutheria</taxon>
        <taxon>Euarchontoglires</taxon>
        <taxon>Glires</taxon>
        <taxon>Rodentia</taxon>
        <taxon>Myomorpha</taxon>
        <taxon>Muroidea</taxon>
        <taxon>Muridae</taxon>
        <taxon>Murinae</taxon>
        <taxon>Mus</taxon>
        <taxon>Mus</taxon>
    </lineage>
</organism>
<accession>Q8K1A6</accession>
<accession>Q2MJB5</accession>
<accession>Q8R3Z4</accession>
<evidence type="ECO:0000250" key="1">
    <source>
        <dbReference type="UniProtKB" id="Q66HA5"/>
    </source>
</evidence>
<evidence type="ECO:0000250" key="2">
    <source>
        <dbReference type="UniProtKB" id="Q6P1N0"/>
    </source>
</evidence>
<evidence type="ECO:0000255" key="3"/>
<evidence type="ECO:0000255" key="4">
    <source>
        <dbReference type="PROSITE-ProRule" id="PRU00041"/>
    </source>
</evidence>
<evidence type="ECO:0000256" key="5">
    <source>
        <dbReference type="SAM" id="MobiDB-lite"/>
    </source>
</evidence>
<evidence type="ECO:0000269" key="6">
    <source>
    </source>
</evidence>
<evidence type="ECO:0000269" key="7">
    <source>
    </source>
</evidence>
<evidence type="ECO:0000269" key="8">
    <source>
    </source>
</evidence>
<evidence type="ECO:0000269" key="9">
    <source>
    </source>
</evidence>
<evidence type="ECO:0000305" key="10"/>
<evidence type="ECO:0007744" key="11">
    <source>
    </source>
</evidence>
<evidence type="ECO:0007744" key="12">
    <source>
    </source>
</evidence>
<proteinExistence type="evidence at protein level"/>
<gene>
    <name type="primary">Cc2d1a</name>
</gene>
<comment type="function">
    <text evidence="6 7 9">Transcription factor that binds specifically to the DRE (dual repressor element) and represses HTR1A gene transcription in neuronal cells. The combination of calcium and ATP specifically inactivates the binding with FRE. May play a role in the altered regulation of HTR1A associated with anxiety and major depression. Mediates HDAC-independent repression of HTR1A promoter in neuronal cell. Performs essential function in controlling functional maturation of synapses.</text>
</comment>
<comment type="subcellular location">
    <subcellularLocation>
        <location evidence="2">Cytoplasm</location>
    </subcellularLocation>
    <subcellularLocation>
        <location evidence="1">Nucleus</location>
    </subcellularLocation>
    <subcellularLocation>
        <location evidence="2">Cytoplasm</location>
        <location evidence="2">Cytoskeleton</location>
        <location evidence="2">Microtubule organizing center</location>
        <location evidence="2">Centrosome</location>
    </subcellularLocation>
</comment>
<comment type="tissue specificity">
    <text evidence="8 9">Highly expressed in brain, expression is enriched in the gray matter and strongest in the olfactory bulb.</text>
</comment>
<comment type="developmental stage">
    <text evidence="8">Expressed at 12 dpc throughout the ventricular zone and developing cortical plate and ganglionic eminences. At 16 dpc detected throughout the brain but most strongly in the cortical plate. At postnatal day 3 expressed widely with strong expression in cerebral cortex and hippocampus.</text>
</comment>
<comment type="domain">
    <text>The C2 domain is required for the repression.</text>
</comment>
<comment type="disruption phenotype">
    <text evidence="9">Knockout mice die soon after birth, apparently because of their inability to breathe.</text>
</comment>
<comment type="similarity">
    <text evidence="10">Belongs to the CC2D1 family.</text>
</comment>
<comment type="sequence caution" evidence="10">
    <conflict type="erroneous initiation">
        <sequence resource="EMBL-CDS" id="AAH16188"/>
    </conflict>
</comment>
<comment type="sequence caution" evidence="10">
    <conflict type="erroneous initiation">
        <sequence resource="EMBL-CDS" id="AAH27028"/>
    </conflict>
</comment>
<comment type="sequence caution" evidence="10">
    <conflict type="frameshift">
        <sequence resource="EMBL-CDS" id="ABC56419"/>
    </conflict>
</comment>
<name>C2D1A_MOUSE</name>
<keyword id="KW-0175">Coiled coil</keyword>
<keyword id="KW-0963">Cytoplasm</keyword>
<keyword id="KW-0206">Cytoskeleton</keyword>
<keyword id="KW-0238">DNA-binding</keyword>
<keyword id="KW-0539">Nucleus</keyword>
<keyword id="KW-0597">Phosphoprotein</keyword>
<keyword id="KW-1185">Reference proteome</keyword>
<keyword id="KW-0678">Repressor</keyword>
<keyword id="KW-0804">Transcription</keyword>
<keyword id="KW-0805">Transcription regulation</keyword>
<feature type="chain" id="PRO_0000239610" description="Coiled-coil and C2 domain-containing protein 1A">
    <location>
        <begin position="1"/>
        <end position="943"/>
    </location>
</feature>
<feature type="domain" description="C2" evidence="4">
    <location>
        <begin position="630"/>
        <end position="764"/>
    </location>
</feature>
<feature type="region of interest" description="Disordered" evidence="5">
    <location>
        <begin position="186"/>
        <end position="250"/>
    </location>
</feature>
<feature type="region of interest" description="Disordered" evidence="5">
    <location>
        <begin position="300"/>
        <end position="337"/>
    </location>
</feature>
<feature type="region of interest" description="Disordered" evidence="5">
    <location>
        <begin position="430"/>
        <end position="483"/>
    </location>
</feature>
<feature type="coiled-coil region" evidence="3">
    <location>
        <begin position="339"/>
        <end position="385"/>
    </location>
</feature>
<feature type="coiled-coil region" evidence="3">
    <location>
        <begin position="477"/>
        <end position="510"/>
    </location>
</feature>
<feature type="compositionally biased region" description="Low complexity" evidence="5">
    <location>
        <begin position="195"/>
        <end position="206"/>
    </location>
</feature>
<feature type="compositionally biased region" description="Low complexity" evidence="5">
    <location>
        <begin position="229"/>
        <end position="238"/>
    </location>
</feature>
<feature type="compositionally biased region" description="Pro residues" evidence="5">
    <location>
        <begin position="304"/>
        <end position="319"/>
    </location>
</feature>
<feature type="compositionally biased region" description="Polar residues" evidence="5">
    <location>
        <begin position="445"/>
        <end position="456"/>
    </location>
</feature>
<feature type="compositionally biased region" description="Low complexity" evidence="5">
    <location>
        <begin position="469"/>
        <end position="478"/>
    </location>
</feature>
<feature type="modified residue" description="Phosphothreonine" evidence="1">
    <location>
        <position position="91"/>
    </location>
</feature>
<feature type="modified residue" description="Phosphoserine" evidence="2">
    <location>
        <position position="248"/>
    </location>
</feature>
<feature type="modified residue" description="Phosphoserine" evidence="11 12">
    <location>
        <position position="435"/>
    </location>
</feature>
<feature type="sequence conflict" description="In Ref. 2; ABC56419." evidence="10" ref="2">
    <original>Q</original>
    <variation>H</variation>
    <location>
        <position position="446"/>
    </location>
</feature>
<feature type="sequence conflict" description="In Ref. 2; ABC56419." evidence="10" ref="2">
    <original>P</original>
    <variation>S</variation>
    <location>
        <position position="863"/>
    </location>
</feature>
<reference key="1">
    <citation type="journal article" date="2004" name="Genome Res.">
        <title>The status, quality, and expansion of the NIH full-length cDNA project: the Mammalian Gene Collection (MGC).</title>
        <authorList>
            <consortium name="The MGC Project Team"/>
        </authorList>
    </citation>
    <scope>NUCLEOTIDE SEQUENCE [LARGE SCALE MRNA]</scope>
    <source>
        <tissue>Eye</tissue>
        <tissue>Mammary gland</tissue>
    </source>
</reference>
<reference key="2">
    <citation type="journal article" date="2003" name="J. Neurosci.">
        <title>Freud-1: a neuronal calcium-regulated repressor of the 5-HT1A receptor gene.</title>
        <authorList>
            <person name="Ou X.-M."/>
            <person name="Lemonde S."/>
            <person name="Jafar-Nejad H."/>
            <person name="Bown C.D."/>
            <person name="Goto A."/>
            <person name="Rogaeva A."/>
            <person name="Albert P.R."/>
        </authorList>
    </citation>
    <scope>NUCLEOTIDE SEQUENCE [MRNA] OF 301-943</scope>
    <scope>FUNCTION</scope>
    <source>
        <strain>Swiss Webster</strain>
    </source>
</reference>
<reference key="3">
    <citation type="journal article" date="2004" name="J. Neurochem.">
        <title>Cell type-dependent recruitment of trichostatin A-sensitive repression of the human 5-HT1A receptor gene.</title>
        <authorList>
            <person name="Lemonde S."/>
            <person name="Rogaeva A."/>
            <person name="Albert P.R."/>
        </authorList>
    </citation>
    <scope>FUNCTION</scope>
</reference>
<reference key="4">
    <citation type="journal article" date="2006" name="J. Med. Genet.">
        <title>The CC2D1A, a member of a new gene family with C2 domains, is involved in autosomal recessive non-syndromic mental retardation.</title>
        <authorList>
            <person name="Basel-Vanagaite L."/>
            <person name="Attia R."/>
            <person name="Yahav M."/>
            <person name="Ferland R.J."/>
            <person name="Anteki L."/>
            <person name="Walsh C.A."/>
            <person name="Olender T."/>
            <person name="Straussberg R."/>
            <person name="Magal N."/>
            <person name="Taub E."/>
            <person name="Drasinover V."/>
            <person name="Alkelai A."/>
            <person name="Bercovich D."/>
            <person name="Rechavi G."/>
            <person name="Simon A.J."/>
            <person name="Shohat M."/>
        </authorList>
    </citation>
    <scope>DEVELOPMENTAL STAGE</scope>
    <scope>TISSUE SPECIFICITY</scope>
</reference>
<reference key="5">
    <citation type="journal article" date="2009" name="Immunity">
        <title>The phagosomal proteome in interferon-gamma-activated macrophages.</title>
        <authorList>
            <person name="Trost M."/>
            <person name="English L."/>
            <person name="Lemieux S."/>
            <person name="Courcelles M."/>
            <person name="Desjardins M."/>
            <person name="Thibault P."/>
        </authorList>
    </citation>
    <scope>PHOSPHORYLATION [LARGE SCALE ANALYSIS] AT SER-435</scope>
    <scope>IDENTIFICATION BY MASS SPECTROMETRY [LARGE SCALE ANALYSIS]</scope>
</reference>
<reference key="6">
    <citation type="journal article" date="2010" name="Cell">
        <title>A tissue-specific atlas of mouse protein phosphorylation and expression.</title>
        <authorList>
            <person name="Huttlin E.L."/>
            <person name="Jedrychowski M.P."/>
            <person name="Elias J.E."/>
            <person name="Goswami T."/>
            <person name="Rad R."/>
            <person name="Beausoleil S.A."/>
            <person name="Villen J."/>
            <person name="Haas W."/>
            <person name="Sowa M.E."/>
            <person name="Gygi S.P."/>
        </authorList>
    </citation>
    <scope>PHOSPHORYLATION [LARGE SCALE ANALYSIS] AT SER-435</scope>
    <scope>IDENTIFICATION BY MASS SPECTROMETRY [LARGE SCALE ANALYSIS]</scope>
    <source>
        <tissue>Brain</tissue>
        <tissue>Kidney</tissue>
        <tissue>Liver</tissue>
        <tissue>Lung</tissue>
        <tissue>Pancreas</tissue>
        <tissue>Spleen</tissue>
        <tissue>Testis</tissue>
    </source>
</reference>
<reference key="7">
    <citation type="journal article" date="2011" name="J. Neurophysiol.">
        <title>Cc2d1a, a C2 domain containing protein linked to nonsyndromic mental retardation, controls functional maturation of central synapses.</title>
        <authorList>
            <person name="Zhao M."/>
            <person name="Raingo J."/>
            <person name="Chen Z.J."/>
            <person name="Kavalali E.T."/>
        </authorList>
    </citation>
    <scope>DISRUPTION PHENOTYPE</scope>
    <scope>TISSUE SPECIFICITY</scope>
    <scope>FUNCTION IN SYNAPSE</scope>
</reference>
<dbReference type="EMBL" id="BC016188">
    <property type="protein sequence ID" value="AAH16188.1"/>
    <property type="status" value="ALT_INIT"/>
    <property type="molecule type" value="mRNA"/>
</dbReference>
<dbReference type="EMBL" id="BC027028">
    <property type="protein sequence ID" value="AAH27028.1"/>
    <property type="status" value="ALT_INIT"/>
    <property type="molecule type" value="mRNA"/>
</dbReference>
<dbReference type="EMBL" id="DQ329239">
    <property type="protein sequence ID" value="ABC56419.1"/>
    <property type="status" value="ALT_SEQ"/>
    <property type="molecule type" value="mRNA"/>
</dbReference>
<dbReference type="CCDS" id="CCDS40407.1"/>
<dbReference type="RefSeq" id="NP_666082.2">
    <property type="nucleotide sequence ID" value="NM_145970.2"/>
</dbReference>
<dbReference type="SMR" id="Q8K1A6"/>
<dbReference type="BioGRID" id="229295">
    <property type="interactions" value="3"/>
</dbReference>
<dbReference type="FunCoup" id="Q8K1A6">
    <property type="interactions" value="3468"/>
</dbReference>
<dbReference type="IntAct" id="Q8K1A6">
    <property type="interactions" value="1"/>
</dbReference>
<dbReference type="MINT" id="Q8K1A6"/>
<dbReference type="STRING" id="10090.ENSMUSP00000046449"/>
<dbReference type="GlyGen" id="Q8K1A6">
    <property type="glycosylation" value="2 sites, 1 O-linked glycan (1 site)"/>
</dbReference>
<dbReference type="iPTMnet" id="Q8K1A6"/>
<dbReference type="PhosphoSitePlus" id="Q8K1A6"/>
<dbReference type="jPOST" id="Q8K1A6"/>
<dbReference type="PaxDb" id="10090-ENSMUSP00000046449"/>
<dbReference type="PeptideAtlas" id="Q8K1A6"/>
<dbReference type="ProteomicsDB" id="265468"/>
<dbReference type="Pumba" id="Q8K1A6"/>
<dbReference type="Antibodypedia" id="1689">
    <property type="antibodies" value="186 antibodies from 28 providers"/>
</dbReference>
<dbReference type="Ensembl" id="ENSMUST00000040383.9">
    <property type="protein sequence ID" value="ENSMUSP00000046449.9"/>
    <property type="gene ID" value="ENSMUSG00000036686.17"/>
</dbReference>
<dbReference type="GeneID" id="212139"/>
<dbReference type="KEGG" id="mmu:212139"/>
<dbReference type="UCSC" id="uc009mma.1">
    <property type="organism name" value="mouse"/>
</dbReference>
<dbReference type="AGR" id="MGI:2384831"/>
<dbReference type="CTD" id="54862"/>
<dbReference type="MGI" id="MGI:2384831">
    <property type="gene designation" value="Cc2d1a"/>
</dbReference>
<dbReference type="VEuPathDB" id="HostDB:ENSMUSG00000036686"/>
<dbReference type="eggNOG" id="KOG3837">
    <property type="taxonomic scope" value="Eukaryota"/>
</dbReference>
<dbReference type="GeneTree" id="ENSGT00390000009595"/>
<dbReference type="InParanoid" id="Q8K1A6"/>
<dbReference type="OMA" id="HQTGRTK"/>
<dbReference type="OrthoDB" id="19996at2759"/>
<dbReference type="PhylomeDB" id="Q8K1A6"/>
<dbReference type="TreeFam" id="TF314229"/>
<dbReference type="BioGRID-ORCS" id="212139">
    <property type="hits" value="2 hits in 77 CRISPR screens"/>
</dbReference>
<dbReference type="CD-CODE" id="CE726F99">
    <property type="entry name" value="Postsynaptic density"/>
</dbReference>
<dbReference type="PRO" id="PR:Q8K1A6"/>
<dbReference type="Proteomes" id="UP000000589">
    <property type="component" value="Chromosome 8"/>
</dbReference>
<dbReference type="RNAct" id="Q8K1A6">
    <property type="molecule type" value="protein"/>
</dbReference>
<dbReference type="Bgee" id="ENSMUSG00000036686">
    <property type="expression patterns" value="Expressed in embryonic brain and 236 other cell types or tissues"/>
</dbReference>
<dbReference type="ExpressionAtlas" id="Q8K1A6">
    <property type="expression patterns" value="baseline and differential"/>
</dbReference>
<dbReference type="GO" id="GO:0036064">
    <property type="term" value="C:ciliary basal body"/>
    <property type="evidence" value="ECO:0007669"/>
    <property type="project" value="Ensembl"/>
</dbReference>
<dbReference type="GO" id="GO:0005829">
    <property type="term" value="C:cytosol"/>
    <property type="evidence" value="ECO:0000314"/>
    <property type="project" value="MGI"/>
</dbReference>
<dbReference type="GO" id="GO:0010008">
    <property type="term" value="C:endosome membrane"/>
    <property type="evidence" value="ECO:0000314"/>
    <property type="project" value="MGI"/>
</dbReference>
<dbReference type="GO" id="GO:0001650">
    <property type="term" value="C:fibrillar center"/>
    <property type="evidence" value="ECO:0007669"/>
    <property type="project" value="Ensembl"/>
</dbReference>
<dbReference type="GO" id="GO:0098978">
    <property type="term" value="C:glutamatergic synapse"/>
    <property type="evidence" value="ECO:0000314"/>
    <property type="project" value="SynGO"/>
</dbReference>
<dbReference type="GO" id="GO:0005634">
    <property type="term" value="C:nucleus"/>
    <property type="evidence" value="ECO:0000266"/>
    <property type="project" value="MGI"/>
</dbReference>
<dbReference type="GO" id="GO:0005886">
    <property type="term" value="C:plasma membrane"/>
    <property type="evidence" value="ECO:0007669"/>
    <property type="project" value="Ensembl"/>
</dbReference>
<dbReference type="GO" id="GO:0045202">
    <property type="term" value="C:synapse"/>
    <property type="evidence" value="ECO:0000314"/>
    <property type="project" value="SynGO"/>
</dbReference>
<dbReference type="GO" id="GO:0001227">
    <property type="term" value="F:DNA-binding transcription repressor activity, RNA polymerase II-specific"/>
    <property type="evidence" value="ECO:0000314"/>
    <property type="project" value="MGI"/>
</dbReference>
<dbReference type="GO" id="GO:0000978">
    <property type="term" value="F:RNA polymerase II cis-regulatory region sequence-specific DNA binding"/>
    <property type="evidence" value="ECO:0000314"/>
    <property type="project" value="MGI"/>
</dbReference>
<dbReference type="GO" id="GO:0150023">
    <property type="term" value="P:apical dendrite arborization"/>
    <property type="evidence" value="ECO:0000315"/>
    <property type="project" value="MGI"/>
</dbReference>
<dbReference type="GO" id="GO:0140059">
    <property type="term" value="P:dendrite arborization"/>
    <property type="evidence" value="ECO:0000315"/>
    <property type="project" value="MGI"/>
</dbReference>
<dbReference type="GO" id="GO:0007032">
    <property type="term" value="P:endosome organization"/>
    <property type="evidence" value="ECO:0000315"/>
    <property type="project" value="MGI"/>
</dbReference>
<dbReference type="GO" id="GO:1905381">
    <property type="term" value="P:negative regulation of snRNA transcription by RNA polymerase II"/>
    <property type="evidence" value="ECO:0007669"/>
    <property type="project" value="Ensembl"/>
</dbReference>
<dbReference type="GO" id="GO:0000122">
    <property type="term" value="P:negative regulation of transcription by RNA polymerase II"/>
    <property type="evidence" value="ECO:0000314"/>
    <property type="project" value="MGI"/>
</dbReference>
<dbReference type="GO" id="GO:0150052">
    <property type="term" value="P:regulation of postsynapse assembly"/>
    <property type="evidence" value="ECO:0000314"/>
    <property type="project" value="SynGO"/>
</dbReference>
<dbReference type="GO" id="GO:0043576">
    <property type="term" value="P:regulation of respiratory gaseous exchange"/>
    <property type="evidence" value="ECO:0000315"/>
    <property type="project" value="MGI"/>
</dbReference>
<dbReference type="GO" id="GO:0002087">
    <property type="term" value="P:regulation of respiratory gaseous exchange by nervous system process"/>
    <property type="evidence" value="ECO:0000315"/>
    <property type="project" value="MGI"/>
</dbReference>
<dbReference type="CDD" id="cd08690">
    <property type="entry name" value="C2_Freud-1"/>
    <property type="match status" value="1"/>
</dbReference>
<dbReference type="FunFam" id="2.60.40.150:FF:000110">
    <property type="entry name" value="Coiled-coil and C2 domain-containing protein 1A"/>
    <property type="match status" value="1"/>
</dbReference>
<dbReference type="Gene3D" id="2.60.40.150">
    <property type="entry name" value="C2 domain"/>
    <property type="match status" value="1"/>
</dbReference>
<dbReference type="InterPro" id="IPR000008">
    <property type="entry name" value="C2_dom"/>
</dbReference>
<dbReference type="InterPro" id="IPR035892">
    <property type="entry name" value="C2_domain_sf"/>
</dbReference>
<dbReference type="InterPro" id="IPR037772">
    <property type="entry name" value="C2_Freud"/>
</dbReference>
<dbReference type="InterPro" id="IPR039725">
    <property type="entry name" value="CC2D1A/B"/>
</dbReference>
<dbReference type="InterPro" id="IPR006608">
    <property type="entry name" value="CC2D1A/B_DM14"/>
</dbReference>
<dbReference type="PANTHER" id="PTHR13076">
    <property type="entry name" value="COILED-COIL AND C2 DOMAIN-CONTAINING PROTEIN 1-LIKE"/>
    <property type="match status" value="1"/>
</dbReference>
<dbReference type="PANTHER" id="PTHR13076:SF8">
    <property type="entry name" value="COILED-COIL AND C2 DOMAIN-CONTAINING PROTEIN 1A"/>
    <property type="match status" value="1"/>
</dbReference>
<dbReference type="Pfam" id="PF00168">
    <property type="entry name" value="C2"/>
    <property type="match status" value="1"/>
</dbReference>
<dbReference type="Pfam" id="PF21528">
    <property type="entry name" value="CC2D1A-B_DM14"/>
    <property type="match status" value="3"/>
</dbReference>
<dbReference type="SMART" id="SM00239">
    <property type="entry name" value="C2"/>
    <property type="match status" value="1"/>
</dbReference>
<dbReference type="SMART" id="SM00685">
    <property type="entry name" value="DM14"/>
    <property type="match status" value="4"/>
</dbReference>
<dbReference type="SUPFAM" id="SSF49562">
    <property type="entry name" value="C2 domain (Calcium/lipid-binding domain, CaLB)"/>
    <property type="match status" value="1"/>
</dbReference>
<dbReference type="PROSITE" id="PS50004">
    <property type="entry name" value="C2"/>
    <property type="match status" value="1"/>
</dbReference>
<protein>
    <recommendedName>
        <fullName>Coiled-coil and C2 domain-containing protein 1A</fullName>
    </recommendedName>
    <alternativeName>
        <fullName>Five prime repressor element under dual repression-binding protein 1</fullName>
        <shortName>FRE under dual repression-binding protein 1</shortName>
        <shortName>Freud-1</shortName>
    </alternativeName>
</protein>